<keyword id="KW-0002">3D-structure</keyword>
<keyword id="KW-0051">Antiviral defense</keyword>
<keyword id="KW-0378">Hydrolase</keyword>
<keyword id="KW-0547">Nucleotide-binding</keyword>
<accession>A0A2T5Y4G4</accession>
<comment type="function">
    <text evidence="2 4 7">Effector protein of a CBASS antiviral system with NAD(+) hydrolase activity (PubMed:32877915). CBASS (cyclic oligonucleotide-based antiphage signaling system) provides immunity against bacteriophage. The CD-NTase protein synthesizes cyclic nucleotides in response to infection; these serve as specific second messenger signals. The signals activate a diverse range of effectors, leading to bacterial cell death and thus abortive phage infection. A type I-D(GG) CBASS system (PubMed:32839535).</text>
</comment>
<comment type="function">
    <text evidence="2 3">Upon activation by 3'3'-c-di-GMP forms filaments which hydrolyze NAD(+); filament formation is required for enzyme activation (PubMed:32877915, PubMed:35859168). Induction in an E.coli strain that synthesizes c-di-GMP leads to significant growth inhibition (PubMed:32877915, PubMed:35859168). Binds c-di-GMP and 3'3'-cGAMP (3'3'-cyclic GMP-AMP), but not c-di-AMP, 2'3'-cGAMP or cUMP-AMP (PubMed:32877915).</text>
</comment>
<comment type="catalytic activity">
    <reaction evidence="2 3">
        <text>NAD(+) + H2O = ADP-D-ribose + nicotinamide + H(+)</text>
        <dbReference type="Rhea" id="RHEA:16301"/>
        <dbReference type="ChEBI" id="CHEBI:15377"/>
        <dbReference type="ChEBI" id="CHEBI:15378"/>
        <dbReference type="ChEBI" id="CHEBI:17154"/>
        <dbReference type="ChEBI" id="CHEBI:57540"/>
        <dbReference type="ChEBI" id="CHEBI:57967"/>
        <dbReference type="EC" id="3.2.2.5"/>
    </reaction>
</comment>
<comment type="activity regulation">
    <text evidence="2 3">NAD(+) hydrolase activity is strongly stimulated by c-di-GMP, weakly by 3'3'-cGAMP, very weakly by c-di-AMP and not at all by 2'3'-cGAMP (PubMed:32877915). Self-association of TIR domains is required for NADase activity (PubMed:32877915, PubMed:35859168).</text>
</comment>
<comment type="biophysicochemical properties">
    <kinetics>
        <KM evidence="2">27 uM for NAD(+)</KM>
        <text evidence="2">kcat is 2.3 sec(-1).</text>
    </kinetics>
</comment>
<comment type="subunit">
    <text evidence="2 3">Forms homodimers which subsequently form filaments (PubMed:32877915, PubMed:35859168). In vitro in the presence of c-di-GMP forms filaments up to 300 nm in length with an ordered array of parallel-stacked subunits, where the TIR domains form one face of the filament and the STING domains form the other face (PubMed:32877915, PubMed:35859168). Antiparallel double-filament structures are also seen (PubMed:35859168). 3'3'-cGAMP weakly induces filament formation, while 2'3'-cGAMP does not (PubMed:32877915, PubMed:35859168).</text>
</comment>
<comment type="domain">
    <text evidence="3 7">The N-terminal TIR domain mediates NAD(+) hydrolase (NADase) activity (PubMed:32877915). The cyclic nucleotide binds in the C-terminal bacterial STING region (PubMed:32877915, PubMed:35859168). Upon binding to c-di-GMP the STING region closes around the ligand, which is bound by residues from 2 adjacent subunits; binding of the weak activator 3',3'-cGAMP only partially closes the domains (PubMed:35859168). STING-STING interactions are the main drivers of filamentation; rearrangements in the STING domain allow reorganization of packing of the TIR domains, forming the NADase active site; cross-filament contacts strengthen the assembly (PubMed:35859168). Most mutations that inhibit filamentation and NAD(+) cleavage are not toxic upon expression in a c-di-GMP expressing strain of E.coli (PubMed:35859168).</text>
</comment>
<comment type="similarity">
    <text evidence="6">In the C-terminal section; belongs to the bacterial STING family.</text>
</comment>
<organism>
    <name type="scientific">Sphingobacterium faecium (strain DSM 11690 / JCM 21820 / NBRC 15299 / NCIMB 13408 / KS 0470)</name>
    <dbReference type="NCBI Taxonomy" id="1220575"/>
    <lineage>
        <taxon>Bacteria</taxon>
        <taxon>Pseudomonadati</taxon>
        <taxon>Bacteroidota</taxon>
        <taxon>Sphingobacteriia</taxon>
        <taxon>Sphingobacteriales</taxon>
        <taxon>Sphingobacteriaceae</taxon>
        <taxon>Sphingobacterium</taxon>
    </lineage>
</organism>
<protein>
    <recommendedName>
        <fullName evidence="6">CD-NTase-associated protein 12</fullName>
        <shortName evidence="6">Cap12</shortName>
    </recommendedName>
    <alternativeName>
        <fullName evidence="5">NAD(+) hydrolase</fullName>
        <ecNumber evidence="2 3">3.2.2.5</ecNumber>
    </alternativeName>
    <alternativeName>
        <fullName evidence="5">TIR-STING</fullName>
        <shortName evidence="5">SfSTING</shortName>
    </alternativeName>
</protein>
<gene>
    <name evidence="6" type="primary">cap12</name>
    <name evidence="10" type="ORF">C8N37_104320</name>
    <name evidence="9" type="ORF">SF1_08920</name>
</gene>
<feature type="chain" id="PRO_0000451881" description="CD-NTase-associated protein 12">
    <location>
        <begin position="1"/>
        <end position="323"/>
    </location>
</feature>
<feature type="domain" description="TIR" evidence="1 7 8">
    <location>
        <begin position="4"/>
        <end position="120"/>
    </location>
</feature>
<feature type="region of interest" description="STING domain" evidence="3">
    <location>
        <begin position="154"/>
        <end position="323"/>
    </location>
</feature>
<feature type="active site" evidence="7 8">
    <location>
        <position position="84"/>
    </location>
</feature>
<feature type="binding site" evidence="3 11 12">
    <location>
        <position position="164"/>
    </location>
    <ligand>
        <name>3',3'-c-di-GMP</name>
        <dbReference type="ChEBI" id="CHEBI:58805"/>
    </ligand>
</feature>
<feature type="binding site" evidence="3">
    <location>
        <position position="165"/>
    </location>
    <ligand>
        <name>3',3'-c-di-GMP</name>
        <dbReference type="ChEBI" id="CHEBI:58805"/>
    </ligand>
</feature>
<feature type="binding site" evidence="3 11 12">
    <location>
        <position position="234"/>
    </location>
    <ligand>
        <name>3',3'-c-di-GMP</name>
        <dbReference type="ChEBI" id="CHEBI:58805"/>
    </ligand>
</feature>
<feature type="binding site" evidence="3 11 12">
    <location>
        <position position="237"/>
    </location>
    <ligand>
        <name>3',3'-c-di-GMP</name>
        <dbReference type="ChEBI" id="CHEBI:58805"/>
    </ligand>
</feature>
<feature type="binding site" evidence="3 11 12">
    <location>
        <position position="259"/>
    </location>
    <ligand>
        <name>3',3'-c-di-GMP</name>
        <dbReference type="ChEBI" id="CHEBI:58805"/>
    </ligand>
</feature>
<feature type="binding site" evidence="3 11 12">
    <location>
        <position position="262"/>
    </location>
    <ligand>
        <name>3',3'-c-di-GMP</name>
        <dbReference type="ChEBI" id="CHEBI:58805"/>
    </ligand>
</feature>
<feature type="binding site" evidence="3 11 12">
    <location>
        <position position="263"/>
    </location>
    <ligand>
        <name>3',3'-c-di-GMP</name>
        <dbReference type="ChEBI" id="CHEBI:58805"/>
    </ligand>
</feature>
<feature type="mutagenesis site" description="Loss of NAD(+) cleavage, binds c-di-GMP, still forms filaments." evidence="3">
    <original>AFALNK</original>
    <variation>GSGG</variation>
    <location>
        <begin position="36"/>
        <end position="41"/>
    </location>
</feature>
<feature type="mutagenesis site" description="1000-fold decrease of NAD(+) cleavage, binds c-di-GMP, does not form filaments." evidence="3">
    <original>R</original>
    <variation>E</variation>
    <location>
        <position position="52"/>
    </location>
</feature>
<feature type="mutagenesis site" description="No NAD(+) cleavage, still forms filaments in the presence of c-di-GMP and weakly with 3'3'-cGAMP." evidence="2">
    <original>E</original>
    <variation>A</variation>
    <location>
        <position position="84"/>
    </location>
</feature>
<feature type="mutagenesis site" description="10-fold decrease of NAD(+) cleavage, binds c-di-GMP, still forms filaments, inhibits growth in E.coli." evidence="3">
    <original>E</original>
    <variation>Q</variation>
    <location>
        <position position="95"/>
    </location>
</feature>
<feature type="mutagenesis site" description="No NAD(+) cleavage activity, binds c-di-GMP." evidence="3">
    <original>D</original>
    <variation>A</variation>
    <location>
        <position position="110"/>
    </location>
</feature>
<feature type="mutagenesis site" description="100-fold decrease of NAD(+) cleavage, binds c-di-GMP, forms some filaments." evidence="3">
    <original>K</original>
    <variation>D</variation>
    <location>
        <position position="142"/>
    </location>
</feature>
<feature type="mutagenesis site" description="Requires 10X more c-di-GMP for activation." evidence="2">
    <original>N</original>
    <variation>A</variation>
    <location>
        <position position="163"/>
    </location>
</feature>
<feature type="mutagenesis site" description="Poorly activated by c-di-GMP." evidence="2">
    <original>F</original>
    <variation>A</variation>
    <location>
        <position position="165"/>
    </location>
</feature>
<feature type="mutagenesis site" description="About wild-type activation by c-di-GMP." evidence="2">
    <original>K</original>
    <variation>A</variation>
    <location>
        <position position="167"/>
    </location>
</feature>
<feature type="mutagenesis site" description="Requires 100X more c-di-GMP for activation." evidence="2">
    <original>R</original>
    <variation>A</variation>
    <location>
        <position position="168"/>
    </location>
</feature>
<feature type="mutagenesis site" description="10-fold decrease of NAD(+) cleavage, binds c-di-GMP, does not form filaments." evidence="3">
    <original>E</original>
    <variation>R</variation>
    <location>
        <position position="171"/>
    </location>
</feature>
<feature type="mutagenesis site" description="Binds c-di-GMP, no longer forms filaments, no NAD(+) cleavage." evidence="2">
    <original>LDD</original>
    <variation>RDR</variation>
    <location>
        <begin position="201"/>
        <end position="203"/>
    </location>
</feature>
<feature type="mutagenesis site" description="100-fold decrease of NAD(+) cleavage, binds c-di-GMP, forms some filaments." evidence="3">
    <original>N</original>
    <variation>D</variation>
    <location>
        <position position="208"/>
    </location>
</feature>
<feature type="mutagenesis site" description="No NAD(+) cleavage." evidence="2">
    <original>R</original>
    <variation>A</variation>
    <location>
        <position position="234"/>
    </location>
</feature>
<feature type="mutagenesis site" description="No NAD(+) cleavage, does not inhibit E.coli growth." evidence="2">
    <original>D</original>
    <variation>A</variation>
    <location>
        <position position="259"/>
    </location>
</feature>
<feature type="mutagenesis site" description="Requires 100X more c-di-GMP for activation." evidence="2">
    <original>S</original>
    <variation>A</variation>
    <location>
        <position position="262"/>
    </location>
</feature>
<feature type="mutagenesis site" description="About wild-type activation by c-di-GMP." evidence="2">
    <original>T</original>
    <variation>A</variation>
    <location>
        <position position="263"/>
    </location>
</feature>
<feature type="mutagenesis site" description="Binds c-di-GMP, no longer forms filaments, no NAD(+) cleavage." evidence="2">
    <location>
        <begin position="275"/>
        <end position="282"/>
    </location>
</feature>
<feature type="mutagenesis site" description="100-fold decrease of NAD(+) cleavage, binds c-di-GMP, does not form filaments." evidence="3">
    <original>N</original>
    <variation>E</variation>
    <location>
        <position position="278"/>
    </location>
</feature>
<feature type="mutagenesis site" description="100-fold decrease of NAD(+) cleavage, binds c-di-GMP, does not form filaments." evidence="3">
    <original>Q</original>
    <variation>E</variation>
    <location>
        <position position="279"/>
    </location>
</feature>
<feature type="mutagenesis site" description="No NAD(+) cleavage, binds c-di-GMP, does not form filaments." evidence="3">
    <original>V</original>
    <variation>D</variation>
    <location>
        <position position="280"/>
    </location>
</feature>
<feature type="mutagenesis site" description="100-fold decrease of NAD(+) cleavage, binds c-di-GMP, does not form filaments." evidence="3">
    <original>D</original>
    <variation>K</variation>
    <location>
        <position position="285"/>
    </location>
</feature>
<feature type="mutagenesis site" description="No NAD(+) cleavage, binds c-di-GMP, does not form filaments." evidence="3">
    <original>E</original>
    <variation>K</variation>
    <location>
        <position position="290"/>
    </location>
</feature>
<feature type="mutagenesis site" description="Binds c-di-GMP, no longer forms filaments, no NAD(+) cleavage." evidence="2">
    <original>RNA</original>
    <variation>ENR</variation>
    <location>
        <begin position="307"/>
        <end position="309"/>
    </location>
</feature>
<feature type="mutagenesis site" description="No NAD(+) cleavage, binds c-di-GMP, does not form filaments." evidence="3">
    <original>R</original>
    <variation>E</variation>
    <location>
        <position position="307"/>
    </location>
</feature>
<feature type="mutagenesis site" description="100-fold decrease of NAD(+) cleavage, binds c-di-GMP, does not form filaments." evidence="3">
    <original>A</original>
    <variation>R</variation>
    <location>
        <position position="309"/>
    </location>
</feature>
<feature type="strand" evidence="14">
    <location>
        <begin position="4"/>
        <end position="7"/>
    </location>
</feature>
<feature type="helix" evidence="14">
    <location>
        <begin position="15"/>
        <end position="24"/>
    </location>
</feature>
<feature type="strand" evidence="14">
    <location>
        <begin position="26"/>
        <end position="32"/>
    </location>
</feature>
<feature type="turn" evidence="14">
    <location>
        <begin position="33"/>
        <end position="35"/>
    </location>
</feature>
<feature type="helix" evidence="14">
    <location>
        <begin position="43"/>
        <end position="53"/>
    </location>
</feature>
<feature type="strand" evidence="14">
    <location>
        <begin position="56"/>
        <end position="61"/>
    </location>
</feature>
<feature type="strand" evidence="14">
    <location>
        <begin position="65"/>
        <end position="67"/>
    </location>
</feature>
<feature type="strand" evidence="14">
    <location>
        <begin position="74"/>
        <end position="76"/>
    </location>
</feature>
<feature type="helix" evidence="14">
    <location>
        <begin position="79"/>
        <end position="91"/>
    </location>
</feature>
<feature type="turn" evidence="14">
    <location>
        <begin position="94"/>
        <end position="96"/>
    </location>
</feature>
<feature type="strand" evidence="14">
    <location>
        <begin position="97"/>
        <end position="101"/>
    </location>
</feature>
<feature type="strand" evidence="15">
    <location>
        <begin position="123"/>
        <end position="125"/>
    </location>
</feature>
<feature type="helix" evidence="14">
    <location>
        <begin position="131"/>
        <end position="144"/>
    </location>
</feature>
<feature type="helix" evidence="14">
    <location>
        <begin position="155"/>
        <end position="164"/>
    </location>
</feature>
<feature type="helix" evidence="14">
    <location>
        <begin position="166"/>
        <end position="176"/>
    </location>
</feature>
<feature type="strand" evidence="14">
    <location>
        <begin position="177"/>
        <end position="181"/>
    </location>
</feature>
<feature type="strand" evidence="14">
    <location>
        <begin position="184"/>
        <end position="190"/>
    </location>
</feature>
<feature type="strand" evidence="14">
    <location>
        <begin position="193"/>
        <end position="200"/>
    </location>
</feature>
<feature type="helix" evidence="14">
    <location>
        <begin position="207"/>
        <end position="216"/>
    </location>
</feature>
<feature type="strand" evidence="14">
    <location>
        <begin position="220"/>
        <end position="224"/>
    </location>
</feature>
<feature type="strand" evidence="14">
    <location>
        <begin position="237"/>
        <end position="240"/>
    </location>
</feature>
<feature type="strand" evidence="15">
    <location>
        <begin position="249"/>
        <end position="251"/>
    </location>
</feature>
<feature type="strand" evidence="14">
    <location>
        <begin position="257"/>
        <end position="259"/>
    </location>
</feature>
<feature type="helix" evidence="14">
    <location>
        <begin position="264"/>
        <end position="274"/>
    </location>
</feature>
<feature type="helix" evidence="14">
    <location>
        <begin position="284"/>
        <end position="306"/>
    </location>
</feature>
<feature type="strand" evidence="14">
    <location>
        <begin position="312"/>
        <end position="321"/>
    </location>
</feature>
<name>CAP12_SPHFK</name>
<proteinExistence type="evidence at protein level"/>
<evidence type="ECO:0000255" key="1">
    <source>
        <dbReference type="PROSITE-ProRule" id="PRU00204"/>
    </source>
</evidence>
<evidence type="ECO:0000269" key="2">
    <source>
    </source>
</evidence>
<evidence type="ECO:0000269" key="3">
    <source>
    </source>
</evidence>
<evidence type="ECO:0000303" key="4">
    <source>
    </source>
</evidence>
<evidence type="ECO:0000303" key="5">
    <source>
    </source>
</evidence>
<evidence type="ECO:0000305" key="6"/>
<evidence type="ECO:0000305" key="7">
    <source>
    </source>
</evidence>
<evidence type="ECO:0000305" key="8">
    <source>
    </source>
</evidence>
<evidence type="ECO:0000312" key="9">
    <source>
        <dbReference type="EMBL" id="GEM62910.1"/>
    </source>
</evidence>
<evidence type="ECO:0000312" key="10">
    <source>
        <dbReference type="EMBL" id="PTX11039.1"/>
    </source>
</evidence>
<evidence type="ECO:0000312" key="11">
    <source>
        <dbReference type="PDB" id="7UN8"/>
    </source>
</evidence>
<evidence type="ECO:0000312" key="12">
    <source>
        <dbReference type="PDB" id="7UN9"/>
    </source>
</evidence>
<evidence type="ECO:0000312" key="13">
    <source>
        <dbReference type="PDB" id="7UNA"/>
    </source>
</evidence>
<evidence type="ECO:0007829" key="14">
    <source>
        <dbReference type="PDB" id="7UN8"/>
    </source>
</evidence>
<evidence type="ECO:0007829" key="15">
    <source>
        <dbReference type="PDB" id="7UN9"/>
    </source>
</evidence>
<reference evidence="10" key="1">
    <citation type="submission" date="2018-04" db="EMBL/GenBank/DDBJ databases">
        <title>Genomic Encyclopedia of Archaeal and Bacterial Type Strains, Phase II (KMG-II): from individual species to whole genera.</title>
        <authorList>
            <person name="Goeker M."/>
        </authorList>
    </citation>
    <scope>NUCLEOTIDE SEQUENCE [LARGE SCALE GENOMIC DNA]</scope>
    <source>
        <strain>DSM 11690 / JCM 21820 / NBRC 15299 / NCIMB 13408 / KS 0470</strain>
    </source>
</reference>
<reference evidence="9" key="2">
    <citation type="submission" date="2019-07" db="EMBL/GenBank/DDBJ databases">
        <title>Whole genome shotgun sequence of Sphingobacterium faecium NBRC 15299.</title>
        <authorList>
            <person name="Hosoyama A."/>
            <person name="Uohara A."/>
            <person name="Ohji S."/>
            <person name="Ichikawa N."/>
        </authorList>
    </citation>
    <scope>NUCLEOTIDE SEQUENCE [LARGE SCALE GENOMIC DNA]</scope>
    <source>
        <strain>DSM 11690 / JCM 21820 / NBRC 15299 / NCIMB 13408 / KS 0470</strain>
    </source>
</reference>
<reference key="3">
    <citation type="journal article" date="2020" name="Nature">
        <title>STING cyclic dinucleotide sensing originated in bacteria.</title>
        <authorList>
            <person name="Morehouse B.R."/>
            <person name="Govande A.A."/>
            <person name="Millman A."/>
            <person name="Keszei A.F.A."/>
            <person name="Lowey B."/>
            <person name="Ofir G."/>
            <person name="Shao S."/>
            <person name="Sorek R."/>
            <person name="Kranzusch P.J."/>
        </authorList>
    </citation>
    <scope>FUNCTION AS AN NAD HYDROLASE</scope>
    <scope>CATALYTIC ACTIVITY</scope>
    <scope>PROBABLE ACTIVE SITE</scope>
    <scope>ACTIVITY REGULATION</scope>
    <scope>BIOPHYSICOCHEMICAL PROPERTIES</scope>
    <scope>SUBUNIT</scope>
    <scope>C-DI-GMP-BINDING</scope>
    <scope>NUCLEOTIDE-BINDING</scope>
    <scope>DOMAIN</scope>
    <scope>MUTAGENESIS OF GLU-84; ASN-163; PHE-165; LYS-167; ARG-168; 201-LEU--ASP-203; ARG-234; ASP-259; SER-262; THR-263; 275-LEU--GLN-282 AND 307-ARG--ALA-309</scope>
    <source>
        <strain>DSM 11690 / JCM 21820 / NBRC 15299 / NCIMB 13408 / KS 0470</strain>
    </source>
</reference>
<reference key="4">
    <citation type="journal article" date="2020" name="Nat. Microbiol.">
        <title>Diversity and classification of cyclic-oligonucleotide-based anti-phage signalling systems.</title>
        <authorList>
            <person name="Millman A."/>
            <person name="Melamed S."/>
            <person name="Amitai G."/>
            <person name="Sorek R."/>
        </authorList>
    </citation>
    <scope>CLASSIFICATION AND NOMENCLATURE</scope>
</reference>
<reference evidence="11 12 13" key="5">
    <citation type="journal article" date="2022" name="Nature">
        <title>Cryo-EM structure of an active bacterial TIR-STING filament complex.</title>
        <authorList>
            <person name="Morehouse B.R."/>
            <person name="Yip M.C.J."/>
            <person name="Keszei A.F.A."/>
            <person name="McNamara-Bordewick N.K."/>
            <person name="Shao S."/>
            <person name="Kranzusch P.J."/>
        </authorList>
    </citation>
    <scope>STRUCTURE BY ELECTRON MICROSCOPY (3.30 ANGSTROMS) OF 2-323 IN COMPLEX WITH CYCLIC-DI-GMP OR 3'3'-CGAMP</scope>
    <scope>FUNCTION AS AN NAD HYDROLASE</scope>
    <scope>CATALYTIC ACTIVITY</scope>
    <scope>PROBABLE ACTIVE SITE</scope>
    <scope>ACTIVITY REGULATION</scope>
    <scope>SUBUNIT</scope>
    <scope>DOMAIN</scope>
    <scope>NUCLEOTIDE-BINDING</scope>
    <scope>MUTAGENESIS OF 36-ALA--LYS-41; ARG-52; GLU-95; ASP-110; LYS-142; GLU-171; ASN-208; ASN-278; GLN-279; VAL-280; ASP-285; GLU-290; ARG-307 AND ALA-309</scope>
    <source>
        <strain>DSM 11690 / JCM 21820 / NBRC 15299 / NCIMB 13408 / KS 0470</strain>
    </source>
</reference>
<sequence>MKKRIFIGSSSEQLTILNEIVDLLGDDVECIPWTDAFALNKSGLDSLIKQTRLADYSILIATKDDLTKQRGESLTKPRDNVVFEFGLFLGAAGPEKCYLIAEEDTDLPTDLDGITVAKFTRNSGQYNSLDKIVESIRTHLVKIAEMSQLGLLPSTALAIGYYNSFIKRVCEEIHGSECVELEGKKIKVKSFRVDVVIPETLDDNGVGNFTTLYNKRYGLSKATTCTNPALLGTRGFPFHFKVDPPDANQESPVDIHLLDIPSTLSTIVESLKLYLPSNQVGQDFDMDYLEMRELENFAKVLKYLIGRNAATKGYVNVLTNVKL</sequence>
<dbReference type="EC" id="3.2.2.5" evidence="2 3"/>
<dbReference type="EMBL" id="QBKH01000004">
    <property type="protein sequence ID" value="PTX11039.1"/>
    <property type="molecule type" value="Genomic_DNA"/>
</dbReference>
<dbReference type="EMBL" id="BJXG01000002">
    <property type="protein sequence ID" value="GEM62910.1"/>
    <property type="molecule type" value="Genomic_DNA"/>
</dbReference>
<dbReference type="RefSeq" id="WP_108159326.1">
    <property type="nucleotide sequence ID" value="NZ_BJXG01000002.1"/>
</dbReference>
<dbReference type="PDB" id="7UN8">
    <property type="method" value="EM"/>
    <property type="resolution" value="3.30 A"/>
    <property type="chains" value="A/B/C/D/E/F=2-323"/>
</dbReference>
<dbReference type="PDB" id="7UN9">
    <property type="method" value="EM"/>
    <property type="resolution" value="3.30 A"/>
    <property type="chains" value="A/B/C/D/E/F/G/H/I/J/K/L=58-323"/>
</dbReference>
<dbReference type="PDB" id="7UNA">
    <property type="method" value="EM"/>
    <property type="resolution" value="4.00 A"/>
    <property type="chains" value="A/B/C/D/E/F/G/H=2-323"/>
</dbReference>
<dbReference type="PDBsum" id="7UN8"/>
<dbReference type="PDBsum" id="7UN9"/>
<dbReference type="PDBsum" id="7UNA"/>
<dbReference type="EMDB" id="EMD-26616"/>
<dbReference type="EMDB" id="EMD-26617"/>
<dbReference type="EMDB" id="EMD-26618"/>
<dbReference type="SMR" id="A0A2T5Y4G4"/>
<dbReference type="GeneID" id="90517284"/>
<dbReference type="SABIO-RK" id="A0A2T5Y4G4"/>
<dbReference type="GO" id="GO:0003953">
    <property type="term" value="F:NAD+ nucleosidase activity"/>
    <property type="evidence" value="ECO:0007669"/>
    <property type="project" value="UniProtKB-EC"/>
</dbReference>
<dbReference type="GO" id="GO:0050135">
    <property type="term" value="F:NADP+ nucleosidase activity"/>
    <property type="evidence" value="ECO:0007669"/>
    <property type="project" value="InterPro"/>
</dbReference>
<dbReference type="GO" id="GO:0000166">
    <property type="term" value="F:nucleotide binding"/>
    <property type="evidence" value="ECO:0007669"/>
    <property type="project" value="UniProtKB-KW"/>
</dbReference>
<dbReference type="GO" id="GO:0051607">
    <property type="term" value="P:defense response to virus"/>
    <property type="evidence" value="ECO:0007669"/>
    <property type="project" value="UniProtKB-KW"/>
</dbReference>
<dbReference type="CDD" id="cd22659">
    <property type="entry name" value="STING_bact-like"/>
    <property type="match status" value="1"/>
</dbReference>
<dbReference type="InterPro" id="IPR019302">
    <property type="entry name" value="CAP12/PCTIR_TIR_dom"/>
</dbReference>
<dbReference type="InterPro" id="IPR046876">
    <property type="entry name" value="Prok_STING"/>
</dbReference>
<dbReference type="Pfam" id="PF10137">
    <property type="entry name" value="CAP12-PCTIR_TIR"/>
    <property type="match status" value="1"/>
</dbReference>
<dbReference type="Pfam" id="PF20300">
    <property type="entry name" value="prok_STING"/>
    <property type="match status" value="1"/>
</dbReference>